<comment type="function">
    <text evidence="1">Catalyzes the reversible oxidation of malate to oxaloacetate.</text>
</comment>
<comment type="catalytic activity">
    <reaction evidence="1">
        <text>(S)-malate + NAD(+) = oxaloacetate + NADH + H(+)</text>
        <dbReference type="Rhea" id="RHEA:21432"/>
        <dbReference type="ChEBI" id="CHEBI:15378"/>
        <dbReference type="ChEBI" id="CHEBI:15589"/>
        <dbReference type="ChEBI" id="CHEBI:16452"/>
        <dbReference type="ChEBI" id="CHEBI:57540"/>
        <dbReference type="ChEBI" id="CHEBI:57945"/>
        <dbReference type="EC" id="1.1.1.37"/>
    </reaction>
</comment>
<comment type="similarity">
    <text evidence="1">Belongs to the LDH/MDH superfamily. MDH type 2 family.</text>
</comment>
<feature type="chain" id="PRO_0000294386" description="Malate dehydrogenase">
    <location>
        <begin position="1"/>
        <end position="329"/>
    </location>
</feature>
<feature type="active site" description="Proton acceptor" evidence="1">
    <location>
        <position position="188"/>
    </location>
</feature>
<feature type="binding site" evidence="1">
    <location>
        <begin position="12"/>
        <end position="18"/>
    </location>
    <ligand>
        <name>NAD(+)</name>
        <dbReference type="ChEBI" id="CHEBI:57540"/>
    </ligand>
</feature>
<feature type="binding site" evidence="1">
    <location>
        <position position="93"/>
    </location>
    <ligand>
        <name>substrate</name>
    </ligand>
</feature>
<feature type="binding site" evidence="1">
    <location>
        <position position="99"/>
    </location>
    <ligand>
        <name>substrate</name>
    </ligand>
</feature>
<feature type="binding site" evidence="1">
    <location>
        <position position="106"/>
    </location>
    <ligand>
        <name>NAD(+)</name>
        <dbReference type="ChEBI" id="CHEBI:57540"/>
    </ligand>
</feature>
<feature type="binding site" evidence="1">
    <location>
        <position position="113"/>
    </location>
    <ligand>
        <name>NAD(+)</name>
        <dbReference type="ChEBI" id="CHEBI:57540"/>
    </ligand>
</feature>
<feature type="binding site" evidence="1">
    <location>
        <begin position="130"/>
        <end position="132"/>
    </location>
    <ligand>
        <name>NAD(+)</name>
        <dbReference type="ChEBI" id="CHEBI:57540"/>
    </ligand>
</feature>
<feature type="binding site" evidence="1">
    <location>
        <position position="132"/>
    </location>
    <ligand>
        <name>substrate</name>
    </ligand>
</feature>
<feature type="binding site" evidence="1">
    <location>
        <position position="163"/>
    </location>
    <ligand>
        <name>substrate</name>
    </ligand>
</feature>
<sequence length="329" mass="34399">MSSTPVNVTVTGAAGQIGYALLFRIASGQLLGADTPVKLRLLEIPQAVRAAEGTALELEDSAFPLLAGVDVFDDAKRAFEGTNVALLVGARPRTKGMERGDLLSANGGIFKPQGEAINSGAAEDIRVLVVGNPANTNALIAQTHAPDVPAERFTAMTRLDHNRAIAQLAKKLGVPSAEIKKITIWGNHSATQYPDIFHAEVGGRSGAEAVGDQAWIADEFIPRVAKRGAEIIEVRGASSAASAASAAIDHIFTWVNGTPAGDWTSAAIPSDGSYGVPEGLISSFPVTASGGRFEIVQGLELDAFSREKIDASVRELAEEREAVRALGLI</sequence>
<gene>
    <name evidence="1" type="primary">mdh</name>
    <name type="ordered locus">Francci3_3441</name>
</gene>
<evidence type="ECO:0000255" key="1">
    <source>
        <dbReference type="HAMAP-Rule" id="MF_01517"/>
    </source>
</evidence>
<reference key="1">
    <citation type="journal article" date="2007" name="Genome Res.">
        <title>Genome characteristics of facultatively symbiotic Frankia sp. strains reflect host range and host plant biogeography.</title>
        <authorList>
            <person name="Normand P."/>
            <person name="Lapierre P."/>
            <person name="Tisa L.S."/>
            <person name="Gogarten J.P."/>
            <person name="Alloisio N."/>
            <person name="Bagnarol E."/>
            <person name="Bassi C.A."/>
            <person name="Berry A.M."/>
            <person name="Bickhart D.M."/>
            <person name="Choisne N."/>
            <person name="Couloux A."/>
            <person name="Cournoyer B."/>
            <person name="Cruveiller S."/>
            <person name="Daubin V."/>
            <person name="Demange N."/>
            <person name="Francino M.P."/>
            <person name="Goltsman E."/>
            <person name="Huang Y."/>
            <person name="Kopp O.R."/>
            <person name="Labarre L."/>
            <person name="Lapidus A."/>
            <person name="Lavire C."/>
            <person name="Marechal J."/>
            <person name="Martinez M."/>
            <person name="Mastronunzio J.E."/>
            <person name="Mullin B.C."/>
            <person name="Niemann J."/>
            <person name="Pujic P."/>
            <person name="Rawnsley T."/>
            <person name="Rouy Z."/>
            <person name="Schenowitz C."/>
            <person name="Sellstedt A."/>
            <person name="Tavares F."/>
            <person name="Tomkins J.P."/>
            <person name="Vallenet D."/>
            <person name="Valverde C."/>
            <person name="Wall L.G."/>
            <person name="Wang Y."/>
            <person name="Medigue C."/>
            <person name="Benson D.R."/>
        </authorList>
    </citation>
    <scope>NUCLEOTIDE SEQUENCE [LARGE SCALE GENOMIC DNA]</scope>
    <source>
        <strain>DSM 45818 / CECT 9043 / HFP020203 / CcI3</strain>
    </source>
</reference>
<organism>
    <name type="scientific">Frankia casuarinae (strain DSM 45818 / CECT 9043 / HFP020203 / CcI3)</name>
    <dbReference type="NCBI Taxonomy" id="106370"/>
    <lineage>
        <taxon>Bacteria</taxon>
        <taxon>Bacillati</taxon>
        <taxon>Actinomycetota</taxon>
        <taxon>Actinomycetes</taxon>
        <taxon>Frankiales</taxon>
        <taxon>Frankiaceae</taxon>
        <taxon>Frankia</taxon>
    </lineage>
</organism>
<protein>
    <recommendedName>
        <fullName evidence="1">Malate dehydrogenase</fullName>
        <ecNumber evidence="1">1.1.1.37</ecNumber>
    </recommendedName>
</protein>
<name>MDH_FRACC</name>
<dbReference type="EC" id="1.1.1.37" evidence="1"/>
<dbReference type="EMBL" id="CP000249">
    <property type="protein sequence ID" value="ABD12795.1"/>
    <property type="molecule type" value="Genomic_DNA"/>
</dbReference>
<dbReference type="RefSeq" id="WP_011437820.1">
    <property type="nucleotide sequence ID" value="NZ_LRTJ01000035.1"/>
</dbReference>
<dbReference type="SMR" id="Q2J7E7"/>
<dbReference type="STRING" id="106370.Francci3_3441"/>
<dbReference type="KEGG" id="fra:Francci3_3441"/>
<dbReference type="eggNOG" id="COG0039">
    <property type="taxonomic scope" value="Bacteria"/>
</dbReference>
<dbReference type="HOGENOM" id="CLU_040727_2_0_11"/>
<dbReference type="OrthoDB" id="9802969at2"/>
<dbReference type="PhylomeDB" id="Q2J7E7"/>
<dbReference type="Proteomes" id="UP000001937">
    <property type="component" value="Chromosome"/>
</dbReference>
<dbReference type="GO" id="GO:0030060">
    <property type="term" value="F:L-malate dehydrogenase (NAD+) activity"/>
    <property type="evidence" value="ECO:0007669"/>
    <property type="project" value="UniProtKB-UniRule"/>
</dbReference>
<dbReference type="GO" id="GO:0006108">
    <property type="term" value="P:malate metabolic process"/>
    <property type="evidence" value="ECO:0007669"/>
    <property type="project" value="InterPro"/>
</dbReference>
<dbReference type="GO" id="GO:0006099">
    <property type="term" value="P:tricarboxylic acid cycle"/>
    <property type="evidence" value="ECO:0007669"/>
    <property type="project" value="UniProtKB-UniRule"/>
</dbReference>
<dbReference type="CDD" id="cd01338">
    <property type="entry name" value="MDH_chloroplast-like"/>
    <property type="match status" value="1"/>
</dbReference>
<dbReference type="FunFam" id="3.40.50.720:FF:000010">
    <property type="entry name" value="Malate dehydrogenase"/>
    <property type="match status" value="1"/>
</dbReference>
<dbReference type="FunFam" id="3.90.110.10:FF:000002">
    <property type="entry name" value="Malate dehydrogenase"/>
    <property type="match status" value="1"/>
</dbReference>
<dbReference type="Gene3D" id="3.90.110.10">
    <property type="entry name" value="Lactate dehydrogenase/glycoside hydrolase, family 4, C-terminal"/>
    <property type="match status" value="1"/>
</dbReference>
<dbReference type="Gene3D" id="3.40.50.720">
    <property type="entry name" value="NAD(P)-binding Rossmann-like Domain"/>
    <property type="match status" value="1"/>
</dbReference>
<dbReference type="HAMAP" id="MF_01517">
    <property type="entry name" value="Malate_dehydrog_2"/>
    <property type="match status" value="1"/>
</dbReference>
<dbReference type="InterPro" id="IPR001557">
    <property type="entry name" value="L-lactate/malate_DH"/>
</dbReference>
<dbReference type="InterPro" id="IPR022383">
    <property type="entry name" value="Lactate/malate_DH_C"/>
</dbReference>
<dbReference type="InterPro" id="IPR001236">
    <property type="entry name" value="Lactate/malate_DH_N"/>
</dbReference>
<dbReference type="InterPro" id="IPR015955">
    <property type="entry name" value="Lactate_DH/Glyco_Ohase_4_C"/>
</dbReference>
<dbReference type="InterPro" id="IPR001252">
    <property type="entry name" value="Malate_DH_AS"/>
</dbReference>
<dbReference type="InterPro" id="IPR010945">
    <property type="entry name" value="Malate_DH_type2"/>
</dbReference>
<dbReference type="InterPro" id="IPR036291">
    <property type="entry name" value="NAD(P)-bd_dom_sf"/>
</dbReference>
<dbReference type="NCBIfam" id="TIGR01759">
    <property type="entry name" value="MalateDH-SF1"/>
    <property type="match status" value="1"/>
</dbReference>
<dbReference type="NCBIfam" id="NF003916">
    <property type="entry name" value="PRK05442.1"/>
    <property type="match status" value="1"/>
</dbReference>
<dbReference type="PANTHER" id="PTHR23382">
    <property type="entry name" value="MALATE DEHYDROGENASE"/>
    <property type="match status" value="1"/>
</dbReference>
<dbReference type="Pfam" id="PF02866">
    <property type="entry name" value="Ldh_1_C"/>
    <property type="match status" value="1"/>
</dbReference>
<dbReference type="Pfam" id="PF00056">
    <property type="entry name" value="Ldh_1_N"/>
    <property type="match status" value="1"/>
</dbReference>
<dbReference type="PIRSF" id="PIRSF000102">
    <property type="entry name" value="Lac_mal_DH"/>
    <property type="match status" value="1"/>
</dbReference>
<dbReference type="SUPFAM" id="SSF56327">
    <property type="entry name" value="LDH C-terminal domain-like"/>
    <property type="match status" value="1"/>
</dbReference>
<dbReference type="SUPFAM" id="SSF51735">
    <property type="entry name" value="NAD(P)-binding Rossmann-fold domains"/>
    <property type="match status" value="1"/>
</dbReference>
<dbReference type="PROSITE" id="PS00068">
    <property type="entry name" value="MDH"/>
    <property type="match status" value="1"/>
</dbReference>
<accession>Q2J7E7</accession>
<proteinExistence type="inferred from homology"/>
<keyword id="KW-0520">NAD</keyword>
<keyword id="KW-0560">Oxidoreductase</keyword>
<keyword id="KW-1185">Reference proteome</keyword>
<keyword id="KW-0816">Tricarboxylic acid cycle</keyword>